<accession>Q6F9N7</accession>
<dbReference type="EC" id="4.1.3.40" evidence="1"/>
<dbReference type="EMBL" id="CR543861">
    <property type="protein sequence ID" value="CAG69227.1"/>
    <property type="molecule type" value="Genomic_DNA"/>
</dbReference>
<dbReference type="RefSeq" id="WP_004928440.1">
    <property type="nucleotide sequence ID" value="NC_005966.1"/>
</dbReference>
<dbReference type="SMR" id="Q6F9N7"/>
<dbReference type="STRING" id="202950.GCA_001485005_01540"/>
<dbReference type="GeneID" id="45234762"/>
<dbReference type="KEGG" id="aci:ACIAD2456"/>
<dbReference type="eggNOG" id="COG3161">
    <property type="taxonomic scope" value="Bacteria"/>
</dbReference>
<dbReference type="HOGENOM" id="CLU_096824_2_1_6"/>
<dbReference type="OrthoDB" id="9789493at2"/>
<dbReference type="BioCyc" id="ASP62977:ACIAD_RS11225-MONOMER"/>
<dbReference type="UniPathway" id="UPA00232"/>
<dbReference type="Proteomes" id="UP000000430">
    <property type="component" value="Chromosome"/>
</dbReference>
<dbReference type="GO" id="GO:0005829">
    <property type="term" value="C:cytosol"/>
    <property type="evidence" value="ECO:0007669"/>
    <property type="project" value="TreeGrafter"/>
</dbReference>
<dbReference type="GO" id="GO:0008813">
    <property type="term" value="F:chorismate lyase activity"/>
    <property type="evidence" value="ECO:0007669"/>
    <property type="project" value="UniProtKB-UniRule"/>
</dbReference>
<dbReference type="GO" id="GO:0042866">
    <property type="term" value="P:pyruvate biosynthetic process"/>
    <property type="evidence" value="ECO:0007669"/>
    <property type="project" value="UniProtKB-UniRule"/>
</dbReference>
<dbReference type="GO" id="GO:0006744">
    <property type="term" value="P:ubiquinone biosynthetic process"/>
    <property type="evidence" value="ECO:0007669"/>
    <property type="project" value="UniProtKB-UniRule"/>
</dbReference>
<dbReference type="Gene3D" id="3.40.1410.10">
    <property type="entry name" value="Chorismate lyase-like"/>
    <property type="match status" value="1"/>
</dbReference>
<dbReference type="HAMAP" id="MF_01632">
    <property type="entry name" value="UbiC"/>
    <property type="match status" value="1"/>
</dbReference>
<dbReference type="InterPro" id="IPR007440">
    <property type="entry name" value="Chorismate--pyruvate_lyase"/>
</dbReference>
<dbReference type="InterPro" id="IPR028978">
    <property type="entry name" value="Chorismate_lyase_/UTRA_dom_sf"/>
</dbReference>
<dbReference type="PANTHER" id="PTHR38683">
    <property type="entry name" value="CHORISMATE PYRUVATE-LYASE"/>
    <property type="match status" value="1"/>
</dbReference>
<dbReference type="PANTHER" id="PTHR38683:SF1">
    <property type="entry name" value="CHORISMATE PYRUVATE-LYASE"/>
    <property type="match status" value="1"/>
</dbReference>
<dbReference type="Pfam" id="PF04345">
    <property type="entry name" value="Chor_lyase"/>
    <property type="match status" value="1"/>
</dbReference>
<dbReference type="SUPFAM" id="SSF64288">
    <property type="entry name" value="Chorismate lyase-like"/>
    <property type="match status" value="1"/>
</dbReference>
<feature type="chain" id="PRO_0000240532" description="Probable chorismate pyruvate-lyase">
    <location>
        <begin position="1"/>
        <end position="167"/>
    </location>
</feature>
<feature type="binding site" evidence="1">
    <location>
        <position position="71"/>
    </location>
    <ligand>
        <name>substrate</name>
    </ligand>
</feature>
<feature type="binding site" evidence="1">
    <location>
        <position position="110"/>
    </location>
    <ligand>
        <name>substrate</name>
    </ligand>
</feature>
<feature type="binding site" evidence="1">
    <location>
        <position position="150"/>
    </location>
    <ligand>
        <name>substrate</name>
    </ligand>
</feature>
<proteinExistence type="inferred from homology"/>
<organism>
    <name type="scientific">Acinetobacter baylyi (strain ATCC 33305 / BD413 / ADP1)</name>
    <dbReference type="NCBI Taxonomy" id="62977"/>
    <lineage>
        <taxon>Bacteria</taxon>
        <taxon>Pseudomonadati</taxon>
        <taxon>Pseudomonadota</taxon>
        <taxon>Gammaproteobacteria</taxon>
        <taxon>Moraxellales</taxon>
        <taxon>Moraxellaceae</taxon>
        <taxon>Acinetobacter</taxon>
    </lineage>
</organism>
<keyword id="KW-0963">Cytoplasm</keyword>
<keyword id="KW-0456">Lyase</keyword>
<keyword id="KW-0670">Pyruvate</keyword>
<keyword id="KW-0831">Ubiquinone biosynthesis</keyword>
<comment type="function">
    <text evidence="1">Removes the pyruvyl group from chorismate, with concomitant aromatization of the ring, to provide 4-hydroxybenzoate (4HB) for the ubiquinone pathway.</text>
</comment>
<comment type="catalytic activity">
    <reaction evidence="1">
        <text>chorismate = 4-hydroxybenzoate + pyruvate</text>
        <dbReference type="Rhea" id="RHEA:16505"/>
        <dbReference type="ChEBI" id="CHEBI:15361"/>
        <dbReference type="ChEBI" id="CHEBI:17879"/>
        <dbReference type="ChEBI" id="CHEBI:29748"/>
        <dbReference type="EC" id="4.1.3.40"/>
    </reaction>
</comment>
<comment type="pathway">
    <text evidence="1">Cofactor biosynthesis; ubiquinone biosynthesis.</text>
</comment>
<comment type="subcellular location">
    <subcellularLocation>
        <location evidence="1">Cytoplasm</location>
    </subcellularLocation>
</comment>
<comment type="similarity">
    <text evidence="1">Belongs to the UbiC family.</text>
</comment>
<gene>
    <name evidence="1" type="primary">ubiC</name>
    <name type="ordered locus">ACIAD2456</name>
</gene>
<reference key="1">
    <citation type="journal article" date="2004" name="Nucleic Acids Res.">
        <title>Unique features revealed by the genome sequence of Acinetobacter sp. ADP1, a versatile and naturally transformation competent bacterium.</title>
        <authorList>
            <person name="Barbe V."/>
            <person name="Vallenet D."/>
            <person name="Fonknechten N."/>
            <person name="Kreimeyer A."/>
            <person name="Oztas S."/>
            <person name="Labarre L."/>
            <person name="Cruveiller S."/>
            <person name="Robert C."/>
            <person name="Duprat S."/>
            <person name="Wincker P."/>
            <person name="Ornston L.N."/>
            <person name="Weissenbach J."/>
            <person name="Marliere P."/>
            <person name="Cohen G.N."/>
            <person name="Medigue C."/>
        </authorList>
    </citation>
    <scope>NUCLEOTIDE SEQUENCE [LARGE SCALE GENOMIC DNA]</scope>
    <source>
        <strain>ATCC 33305 / BD413 / ADP1</strain>
    </source>
</reference>
<sequence length="167" mass="19927">MQKIQSNQIQEQDLTPELKKWLYASGSLTQQLTDLADGLFTVEPIQEKYQRMSFMDSRWMRMPAYHVAWVRESLLYGCEQQPWVKAKSIFPVLSLQKKARIFKHIGKKPIGRFLFQRTTPLCERRVIRLEEGWTRQSCYTWHGCKFIVQETFLASFEQYIQHHSHSI</sequence>
<name>UBIC_ACIAD</name>
<evidence type="ECO:0000255" key="1">
    <source>
        <dbReference type="HAMAP-Rule" id="MF_01632"/>
    </source>
</evidence>
<protein>
    <recommendedName>
        <fullName evidence="1">Probable chorismate pyruvate-lyase</fullName>
        <shortName evidence="1">CL</shortName>
        <shortName evidence="1">CPL</shortName>
        <ecNumber evidence="1">4.1.3.40</ecNumber>
    </recommendedName>
</protein>